<protein>
    <recommendedName>
        <fullName>Uncharacterized protein BB_0043</fullName>
    </recommendedName>
</protein>
<name>Y043_BORBU</name>
<gene>
    <name type="ordered locus">BB_0043</name>
</gene>
<accession>O51072</accession>
<reference key="1">
    <citation type="journal article" date="1997" name="Nature">
        <title>Genomic sequence of a Lyme disease spirochaete, Borrelia burgdorferi.</title>
        <authorList>
            <person name="Fraser C.M."/>
            <person name="Casjens S."/>
            <person name="Huang W.M."/>
            <person name="Sutton G.G."/>
            <person name="Clayton R.A."/>
            <person name="Lathigra R."/>
            <person name="White O."/>
            <person name="Ketchum K.A."/>
            <person name="Dodson R.J."/>
            <person name="Hickey E.K."/>
            <person name="Gwinn M.L."/>
            <person name="Dougherty B.A."/>
            <person name="Tomb J.-F."/>
            <person name="Fleischmann R.D."/>
            <person name="Richardson D.L."/>
            <person name="Peterson J.D."/>
            <person name="Kerlavage A.R."/>
            <person name="Quackenbush J."/>
            <person name="Salzberg S.L."/>
            <person name="Hanson M."/>
            <person name="van Vugt R."/>
            <person name="Palmer N."/>
            <person name="Adams M.D."/>
            <person name="Gocayne J.D."/>
            <person name="Weidman J.F."/>
            <person name="Utterback T.R."/>
            <person name="Watthey L."/>
            <person name="McDonald L.A."/>
            <person name="Artiach P."/>
            <person name="Bowman C."/>
            <person name="Garland S.A."/>
            <person name="Fujii C."/>
            <person name="Cotton M.D."/>
            <person name="Horst K."/>
            <person name="Roberts K.M."/>
            <person name="Hatch B."/>
            <person name="Smith H.O."/>
            <person name="Venter J.C."/>
        </authorList>
    </citation>
    <scope>NUCLEOTIDE SEQUENCE [LARGE SCALE GENOMIC DNA]</scope>
    <source>
        <strain>ATCC 35210 / DSM 4680 / CIP 102532 / B31</strain>
    </source>
</reference>
<organism>
    <name type="scientific">Borreliella burgdorferi (strain ATCC 35210 / DSM 4680 / CIP 102532 / B31)</name>
    <name type="common">Borrelia burgdorferi</name>
    <dbReference type="NCBI Taxonomy" id="224326"/>
    <lineage>
        <taxon>Bacteria</taxon>
        <taxon>Pseudomonadati</taxon>
        <taxon>Spirochaetota</taxon>
        <taxon>Spirochaetia</taxon>
        <taxon>Spirochaetales</taxon>
        <taxon>Borreliaceae</taxon>
        <taxon>Borreliella</taxon>
    </lineage>
</organism>
<dbReference type="EMBL" id="AE000783">
    <property type="protein sequence ID" value="AAC66443.1"/>
    <property type="molecule type" value="Genomic_DNA"/>
</dbReference>
<dbReference type="PIR" id="C70105">
    <property type="entry name" value="C70105"/>
</dbReference>
<dbReference type="RefSeq" id="NP_212177.1">
    <property type="nucleotide sequence ID" value="NC_001318.1"/>
</dbReference>
<dbReference type="RefSeq" id="WP_010889664.1">
    <property type="nucleotide sequence ID" value="NC_001318.1"/>
</dbReference>
<dbReference type="SMR" id="O51072"/>
<dbReference type="STRING" id="224326.BB_0043"/>
<dbReference type="PaxDb" id="224326-BB_0043"/>
<dbReference type="EnsemblBacteria" id="AAC66443">
    <property type="protein sequence ID" value="AAC66443"/>
    <property type="gene ID" value="BB_0043"/>
</dbReference>
<dbReference type="KEGG" id="bbu:BB_0043"/>
<dbReference type="PATRIC" id="fig|224326.49.peg.441"/>
<dbReference type="HOGENOM" id="CLU_069999_0_0_12"/>
<dbReference type="OrthoDB" id="350349at2"/>
<dbReference type="Proteomes" id="UP000001807">
    <property type="component" value="Chromosome"/>
</dbReference>
<feature type="chain" id="PRO_0000174373" description="Uncharacterized protein BB_0043">
    <location>
        <begin position="1"/>
        <end position="346"/>
    </location>
</feature>
<proteinExistence type="predicted"/>
<keyword id="KW-1185">Reference proteome</keyword>
<sequence length="346" mass="40531">MIRKYLIYISLLFIVFEVYSKPAFISQDDSYELDFSSGEVDISVNTNSKFNLSFKDESWIYIKSIENEAFIKLIGESYDNGAVFTFQTFKKEGKIKLVFTYQNVKDSSEFNKIIILKITKNFEVAIPQGVGGGSSRDNNIETGNNLELGGGSISGATSKEIIVRALNLSYINDYKGAIDLLNKYNFNDDKYILLKAEIHYKNGDYLKSYENYLKLKSKYFQSIVFDLIRLAIELNIKEEVLENARYLVEKNVDFSESIYLEIFEFLVTRGEHEFALNFSSLYFPKYINSSFSDKYSYLLGKLYESESKHKDFLKALHYYKLVIDNYPFSYYYERAKIRYLFLKRFF</sequence>